<feature type="chain" id="PRO_0000085512" description="Probable Vpr-like protein">
    <location>
        <begin position="1"/>
        <end position="77"/>
    </location>
</feature>
<feature type="short sequence motif" description="Nuclear export signal">
    <location>
        <begin position="34"/>
        <end position="42"/>
    </location>
</feature>
<feature type="short sequence motif" description="Nuclear localization signal" evidence="1">
    <location>
        <begin position="44"/>
        <end position="53"/>
    </location>
</feature>
<keyword id="KW-1048">Host nucleus</keyword>
<keyword id="KW-0946">Virion</keyword>
<sequence>MEVIRIFNKVAERLDKEAAIRIFVLAHQLERDKLIRLLQGLLWRLRFRKPKSKDCLCWFCCRLYYWQLQSTLSIDTA</sequence>
<organismHost>
    <name type="scientific">Felidae</name>
    <name type="common">cat family</name>
    <dbReference type="NCBI Taxonomy" id="9681"/>
</organismHost>
<name>VPRL_FIVSD</name>
<protein>
    <recommendedName>
        <fullName>Probable Vpr-like protein</fullName>
    </recommendedName>
    <alternativeName>
        <fullName>ORF2</fullName>
    </alternativeName>
    <alternativeName>
        <fullName>OrfA</fullName>
    </alternativeName>
    <alternativeName>
        <fullName>Protein Tat</fullName>
    </alternativeName>
</protein>
<dbReference type="EMBL" id="M36968">
    <property type="protein sequence ID" value="AAA43078.1"/>
    <property type="molecule type" value="Genomic_RNA"/>
</dbReference>
<dbReference type="EMBL" id="S42322">
    <property type="protein sequence ID" value="AAB22931.1"/>
    <property type="molecule type" value="mRNA"/>
</dbReference>
<dbReference type="PIR" id="A42748">
    <property type="entry name" value="A42748"/>
</dbReference>
<dbReference type="SMR" id="P69469"/>
<dbReference type="ELM" id="P69469"/>
<dbReference type="GO" id="GO:0042025">
    <property type="term" value="C:host cell nucleus"/>
    <property type="evidence" value="ECO:0007669"/>
    <property type="project" value="UniProtKB-SubCell"/>
</dbReference>
<dbReference type="GO" id="GO:0044423">
    <property type="term" value="C:virion component"/>
    <property type="evidence" value="ECO:0007669"/>
    <property type="project" value="UniProtKB-KW"/>
</dbReference>
<dbReference type="InterPro" id="IPR035276">
    <property type="entry name" value="FIV_OrfA"/>
</dbReference>
<dbReference type="Pfam" id="PF17495">
    <property type="entry name" value="OrfA"/>
    <property type="match status" value="1"/>
</dbReference>
<comment type="function">
    <text evidence="1">Seems to function as a Vpr-like protein, since it mediates host cell cycle arrest in G2 phase. Cell cycle arrest creates a favorable environment for maximizing viral expression and production.</text>
</comment>
<comment type="subcellular location">
    <subcellularLocation>
        <location evidence="2">Virion</location>
    </subcellularLocation>
    <subcellularLocation>
        <location evidence="1">Host nucleus</location>
    </subcellularLocation>
    <text>Contains both nuclear import and nuclear export signals.</text>
</comment>
<comment type="caution">
    <text evidence="2">Was first thought to be the equivalent of lentiviral Tat protein.</text>
</comment>
<comment type="caution">
    <text evidence="2">PubMed:1323707 sequence does not seem to originate from isolate Petaluma as described, but rather from the strain San Diego.</text>
</comment>
<proteinExistence type="predicted"/>
<evidence type="ECO:0000269" key="1">
    <source>
    </source>
</evidence>
<evidence type="ECO:0000305" key="2"/>
<accession>P69469</accession>
<accession>P19033</accession>
<accession>P69468</accession>
<organism>
    <name type="scientific">Feline immunodeficiency virus (strain San Diego)</name>
    <name type="common">FIV</name>
    <dbReference type="NCBI Taxonomy" id="11675"/>
    <lineage>
        <taxon>Viruses</taxon>
        <taxon>Riboviria</taxon>
        <taxon>Pararnavirae</taxon>
        <taxon>Artverviricota</taxon>
        <taxon>Revtraviricetes</taxon>
        <taxon>Ortervirales</taxon>
        <taxon>Retroviridae</taxon>
        <taxon>Orthoretrovirinae</taxon>
        <taxon>Lentivirus</taxon>
        <taxon>Feline immunodeficiency virus</taxon>
    </lineage>
</organism>
<reference key="1">
    <citation type="journal article" date="1990" name="J. Virol.">
        <title>Comparison of two host cell range variants of feline immunodeficiency virus.</title>
        <authorList>
            <person name="Phillips T.R."/>
            <person name="Talbott R.L."/>
            <person name="Lamont C."/>
            <person name="Muir S."/>
            <person name="Lovelace K.M."/>
            <person name="Elder J.H."/>
        </authorList>
    </citation>
    <scope>NUCLEOTIDE SEQUENCE [GENOMIC RNA]</scope>
    <source>
        <strain>Isolate PPR</strain>
    </source>
</reference>
<reference key="2">
    <citation type="journal article" date="1992" name="J. Virol.">
        <title>Identification of the Rev transactivation and Rev-responsive elements of feline immunodeficiency virus.</title>
        <authorList>
            <person name="Phillips T.R."/>
            <person name="Lamont C."/>
            <person name="Konings D.A.M."/>
            <person name="Shacklett B.L."/>
            <person name="Hamson C.A."/>
            <person name="Luciw P.A."/>
            <person name="Elder J.H."/>
        </authorList>
    </citation>
    <scope>NUCLEOTIDE SEQUENCE [MRNA]</scope>
</reference>
<reference key="3">
    <citation type="journal article" date="2004" name="Virology">
        <title>Feline immunodeficiency virus Orf-A localizes to the nucleus and induces cell cycle arrest.</title>
        <authorList>
            <person name="Gemeniano M.C."/>
            <person name="Sawai E.T."/>
            <person name="Sparger E.E."/>
        </authorList>
    </citation>
    <scope>FUNCTION</scope>
    <scope>NUCLEAR LOCALIZATION SIGNAL</scope>
    <scope>NUCLEAR EXPORT SIGNAL</scope>
    <scope>SUBCELLULAR LOCATION</scope>
</reference>